<comment type="function">
    <text evidence="1">NDH-1 shuttles electrons from NADH, via FMN and iron-sulfur (Fe-S) centers, to quinones in the respiratory chain. The immediate electron acceptor for the enzyme in this species is believed to be ubiquinone. Couples the redox reaction to proton translocation (for every two electrons transferred, four hydrogen ions are translocated across the cytoplasmic membrane), and thus conserves the redox energy in a proton gradient. This subunit may bind ubiquinone.</text>
</comment>
<comment type="catalytic activity">
    <reaction evidence="1">
        <text>a quinone + NADH + 5 H(+)(in) = a quinol + NAD(+) + 4 H(+)(out)</text>
        <dbReference type="Rhea" id="RHEA:57888"/>
        <dbReference type="ChEBI" id="CHEBI:15378"/>
        <dbReference type="ChEBI" id="CHEBI:24646"/>
        <dbReference type="ChEBI" id="CHEBI:57540"/>
        <dbReference type="ChEBI" id="CHEBI:57945"/>
        <dbReference type="ChEBI" id="CHEBI:132124"/>
    </reaction>
</comment>
<comment type="subunit">
    <text evidence="1">NDH-1 is composed of 13 different subunits. Subunits NuoA, H, J, K, L, M, N constitute the membrane sector of the complex.</text>
</comment>
<comment type="subcellular location">
    <subcellularLocation>
        <location evidence="1">Cell inner membrane</location>
        <topology evidence="1">Multi-pass membrane protein</topology>
    </subcellularLocation>
</comment>
<comment type="similarity">
    <text evidence="1">Belongs to the complex I subunit 1 family.</text>
</comment>
<gene>
    <name evidence="1" type="primary">nuoH</name>
    <name type="ordered locus">plu3083</name>
</gene>
<feature type="chain" id="PRO_0000244928" description="NADH-quinone oxidoreductase subunit H">
    <location>
        <begin position="1"/>
        <end position="325"/>
    </location>
</feature>
<feature type="transmembrane region" description="Helical" evidence="1">
    <location>
        <begin position="11"/>
        <end position="31"/>
    </location>
</feature>
<feature type="transmembrane region" description="Helical" evidence="1">
    <location>
        <begin position="81"/>
        <end position="101"/>
    </location>
</feature>
<feature type="transmembrane region" description="Helical" evidence="1">
    <location>
        <begin position="114"/>
        <end position="134"/>
    </location>
</feature>
<feature type="transmembrane region" description="Helical" evidence="1">
    <location>
        <begin position="149"/>
        <end position="169"/>
    </location>
</feature>
<feature type="transmembrane region" description="Helical" evidence="1">
    <location>
        <begin position="186"/>
        <end position="206"/>
    </location>
</feature>
<feature type="transmembrane region" description="Helical" evidence="1">
    <location>
        <begin position="237"/>
        <end position="257"/>
    </location>
</feature>
<feature type="transmembrane region" description="Helical" evidence="1">
    <location>
        <begin position="265"/>
        <end position="285"/>
    </location>
</feature>
<feature type="transmembrane region" description="Helical" evidence="1">
    <location>
        <begin position="304"/>
        <end position="324"/>
    </location>
</feature>
<keyword id="KW-0997">Cell inner membrane</keyword>
<keyword id="KW-1003">Cell membrane</keyword>
<keyword id="KW-0472">Membrane</keyword>
<keyword id="KW-0520">NAD</keyword>
<keyword id="KW-0874">Quinone</keyword>
<keyword id="KW-1185">Reference proteome</keyword>
<keyword id="KW-1278">Translocase</keyword>
<keyword id="KW-0812">Transmembrane</keyword>
<keyword id="KW-1133">Transmembrane helix</keyword>
<keyword id="KW-0830">Ubiquinone</keyword>
<reference key="1">
    <citation type="journal article" date="2003" name="Nat. Biotechnol.">
        <title>The genome sequence of the entomopathogenic bacterium Photorhabdus luminescens.</title>
        <authorList>
            <person name="Duchaud E."/>
            <person name="Rusniok C."/>
            <person name="Frangeul L."/>
            <person name="Buchrieser C."/>
            <person name="Givaudan A."/>
            <person name="Taourit S."/>
            <person name="Bocs S."/>
            <person name="Boursaux-Eude C."/>
            <person name="Chandler M."/>
            <person name="Charles J.-F."/>
            <person name="Dassa E."/>
            <person name="Derose R."/>
            <person name="Derzelle S."/>
            <person name="Freyssinet G."/>
            <person name="Gaudriault S."/>
            <person name="Medigue C."/>
            <person name="Lanois A."/>
            <person name="Powell K."/>
            <person name="Siguier P."/>
            <person name="Vincent R."/>
            <person name="Wingate V."/>
            <person name="Zouine M."/>
            <person name="Glaser P."/>
            <person name="Boemare N."/>
            <person name="Danchin A."/>
            <person name="Kunst F."/>
        </authorList>
    </citation>
    <scope>NUCLEOTIDE SEQUENCE [LARGE SCALE GENOMIC DNA]</scope>
    <source>
        <strain>DSM 15139 / CIP 105565 / TT01</strain>
    </source>
</reference>
<organism>
    <name type="scientific">Photorhabdus laumondii subsp. laumondii (strain DSM 15139 / CIP 105565 / TT01)</name>
    <name type="common">Photorhabdus luminescens subsp. laumondii</name>
    <dbReference type="NCBI Taxonomy" id="243265"/>
    <lineage>
        <taxon>Bacteria</taxon>
        <taxon>Pseudomonadati</taxon>
        <taxon>Pseudomonadota</taxon>
        <taxon>Gammaproteobacteria</taxon>
        <taxon>Enterobacterales</taxon>
        <taxon>Morganellaceae</taxon>
        <taxon>Photorhabdus</taxon>
    </lineage>
</organism>
<proteinExistence type="inferred from homology"/>
<protein>
    <recommendedName>
        <fullName evidence="1">NADH-quinone oxidoreductase subunit H</fullName>
        <ecNumber evidence="1">7.1.1.-</ecNumber>
    </recommendedName>
    <alternativeName>
        <fullName evidence="1">NADH dehydrogenase I subunit H</fullName>
    </alternativeName>
    <alternativeName>
        <fullName evidence="1">NDH-1 subunit H</fullName>
    </alternativeName>
</protein>
<accession>Q7N2J3</accession>
<name>NUOH_PHOLL</name>
<dbReference type="EC" id="7.1.1.-" evidence="1"/>
<dbReference type="EMBL" id="BX571869">
    <property type="protein sequence ID" value="CAE15457.1"/>
    <property type="molecule type" value="Genomic_DNA"/>
</dbReference>
<dbReference type="RefSeq" id="WP_011147300.1">
    <property type="nucleotide sequence ID" value="NC_005126.1"/>
</dbReference>
<dbReference type="SMR" id="Q7N2J3"/>
<dbReference type="STRING" id="243265.plu3083"/>
<dbReference type="GeneID" id="88804701"/>
<dbReference type="KEGG" id="plu:plu3083"/>
<dbReference type="eggNOG" id="COG1005">
    <property type="taxonomic scope" value="Bacteria"/>
</dbReference>
<dbReference type="HOGENOM" id="CLU_015134_0_1_6"/>
<dbReference type="OrthoDB" id="9803734at2"/>
<dbReference type="Proteomes" id="UP000002514">
    <property type="component" value="Chromosome"/>
</dbReference>
<dbReference type="GO" id="GO:0005886">
    <property type="term" value="C:plasma membrane"/>
    <property type="evidence" value="ECO:0007669"/>
    <property type="project" value="UniProtKB-SubCell"/>
</dbReference>
<dbReference type="GO" id="GO:0003954">
    <property type="term" value="F:NADH dehydrogenase activity"/>
    <property type="evidence" value="ECO:0007669"/>
    <property type="project" value="TreeGrafter"/>
</dbReference>
<dbReference type="GO" id="GO:0016655">
    <property type="term" value="F:oxidoreductase activity, acting on NAD(P)H, quinone or similar compound as acceptor"/>
    <property type="evidence" value="ECO:0007669"/>
    <property type="project" value="UniProtKB-UniRule"/>
</dbReference>
<dbReference type="GO" id="GO:0048038">
    <property type="term" value="F:quinone binding"/>
    <property type="evidence" value="ECO:0007669"/>
    <property type="project" value="UniProtKB-KW"/>
</dbReference>
<dbReference type="GO" id="GO:0009060">
    <property type="term" value="P:aerobic respiration"/>
    <property type="evidence" value="ECO:0007669"/>
    <property type="project" value="TreeGrafter"/>
</dbReference>
<dbReference type="HAMAP" id="MF_01350">
    <property type="entry name" value="NDH1_NuoH"/>
    <property type="match status" value="1"/>
</dbReference>
<dbReference type="InterPro" id="IPR001694">
    <property type="entry name" value="NADH_UbQ_OxRdtase_su1/FPO"/>
</dbReference>
<dbReference type="InterPro" id="IPR018086">
    <property type="entry name" value="NADH_UbQ_OxRdtase_su1_CS"/>
</dbReference>
<dbReference type="NCBIfam" id="NF004740">
    <property type="entry name" value="PRK06076.1-1"/>
    <property type="match status" value="1"/>
</dbReference>
<dbReference type="NCBIfam" id="NF004741">
    <property type="entry name" value="PRK06076.1-2"/>
    <property type="match status" value="1"/>
</dbReference>
<dbReference type="PANTHER" id="PTHR11432">
    <property type="entry name" value="NADH DEHYDROGENASE SUBUNIT 1"/>
    <property type="match status" value="1"/>
</dbReference>
<dbReference type="PANTHER" id="PTHR11432:SF3">
    <property type="entry name" value="NADH-UBIQUINONE OXIDOREDUCTASE CHAIN 1"/>
    <property type="match status" value="1"/>
</dbReference>
<dbReference type="Pfam" id="PF00146">
    <property type="entry name" value="NADHdh"/>
    <property type="match status" value="1"/>
</dbReference>
<dbReference type="PROSITE" id="PS00667">
    <property type="entry name" value="COMPLEX1_ND1_1"/>
    <property type="match status" value="1"/>
</dbReference>
<dbReference type="PROSITE" id="PS00668">
    <property type="entry name" value="COMPLEX1_ND1_2"/>
    <property type="match status" value="1"/>
</dbReference>
<sequence>MSWLTPEIIDVLIAVLKAVVILVVVVVCGALMSFGERRLLGLFQNRYGPNRVGWGGSLQIVADMIKMFFKEDWVPRFADRMIFTLAPVIGFVSLLLAFAIVPITPTWMAADLNIGILFFMMMAGLAVYAVLFAGWSSNNKYSLLGAMRASAQTLSYEVFIGLSFMGVVAQADSFNMVDIVNAQEHMWNVIPQFFGFLTFAIAGVAVCHRHPFDQPEAEQELADGYHIEYSGMKFGLFFVGEYIGIVTVSALIVTMFFGGWHGPFLPPFVWFALKTAFFMVMFILIRASLPRPRYDQVMAFGWKICLPLTLLNLLATAAVILYNAQ</sequence>
<evidence type="ECO:0000255" key="1">
    <source>
        <dbReference type="HAMAP-Rule" id="MF_01350"/>
    </source>
</evidence>